<name>SECY2_LACKK</name>
<reference key="1">
    <citation type="journal article" date="2011" name="J. Bacteriol.">
        <title>Complete genome sequence of Lactobacillus kefiranofaciens ZW3.</title>
        <authorList>
            <person name="Wang Y."/>
            <person name="Wang J."/>
            <person name="Ahmed Z."/>
            <person name="Bai X."/>
            <person name="Wang J."/>
        </authorList>
    </citation>
    <scope>NUCLEOTIDE SEQUENCE [LARGE SCALE GENOMIC DNA]</scope>
    <source>
        <strain>CGMCC2809 / ZW3</strain>
    </source>
</reference>
<sequence>MILIIYRALFFVTIPGVNSAALAKLSNNSSLTMLSMFSGGGFENFSIMSLGVTAYITAQIIVQLLQADVIPTFTQWSKEGQTGRKKLDQVTRSLTLVLGLVQATGITLGINTLTNGKFMIENNPFTIIVIAVSMTAGSFIAMWLGDLITENGLGNGISVIITAGILVRFPSMINDVIKGVTFGTKVNWIRFSELMIGAAILILLIVWFTRSELRIPIQYARRAQLTGKDSYLPLKIIVPGVIPVIFASTIMTIPQTILMFFNAGQNSSWYRVVQTFFTLSTTSGVIIYGLMIIFFEYLYSIVQIEPDKFADNLEKQEAYIPNVYPGDPTKEFIQNMLNYLSLPGSLFLMLVSIIPLLVANSVSSSLQIGLSGSSILIITGVLIEIGRQIKGLKLKREYGTFLSTDFSLDD</sequence>
<evidence type="ECO:0000255" key="1">
    <source>
        <dbReference type="HAMAP-Rule" id="MF_01465"/>
    </source>
</evidence>
<accession>F6CFW7</accession>
<proteinExistence type="inferred from homology"/>
<gene>
    <name evidence="1" type="primary">secY2</name>
    <name type="ordered locus">WANG_p1049</name>
</gene>
<comment type="function">
    <text evidence="1">The central subunit of the protein translocation channel SecYEG. Consists of two halves formed by TMs 1-5 and 6-10. These two domains form a lateral gate at the front which open onto the bilayer between TMs 2 and 7, and are clamped together by SecE at the back. The channel is closed by both a pore ring composed of hydrophobic SecY resides and a short helix (helix 2A) on the extracellular side of the membrane which forms a plug. The plug probably moves laterally to allow the channel to open. The ring and the pore may move independently.</text>
</comment>
<comment type="subunit">
    <text evidence="1">Component of the Sec protein translocase complex. Heterotrimer consisting of SecY, SecE and SecG subunits. The heterotrimers can form oligomers, although 1 heterotrimer is thought to be able to translocate proteins. Interacts with the ribosome. Interacts with SecDF, and other proteins may be involved. Interacts with SecA.</text>
</comment>
<comment type="subcellular location">
    <subcellularLocation>
        <location evidence="1">Cell membrane</location>
        <topology evidence="1">Multi-pass membrane protein</topology>
    </subcellularLocation>
</comment>
<comment type="similarity">
    <text evidence="1">Belongs to the SecY/SEC61-alpha family.</text>
</comment>
<organism>
    <name type="scientific">Lactobacillus kefiranofaciens subsp. kefiranofaciens</name>
    <dbReference type="NCBI Taxonomy" id="190905"/>
    <lineage>
        <taxon>Bacteria</taxon>
        <taxon>Bacillati</taxon>
        <taxon>Bacillota</taxon>
        <taxon>Bacilli</taxon>
        <taxon>Lactobacillales</taxon>
        <taxon>Lactobacillaceae</taxon>
        <taxon>Lactobacillus</taxon>
    </lineage>
</organism>
<dbReference type="EMBL" id="CP002765">
    <property type="protein sequence ID" value="AEG41652.1"/>
    <property type="molecule type" value="Genomic_DNA"/>
</dbReference>
<dbReference type="SMR" id="F6CFW7"/>
<dbReference type="KEGG" id="lke:WANG_p1049"/>
<dbReference type="HOGENOM" id="CLU_030313_0_1_9"/>
<dbReference type="GO" id="GO:0005886">
    <property type="term" value="C:plasma membrane"/>
    <property type="evidence" value="ECO:0007669"/>
    <property type="project" value="UniProtKB-SubCell"/>
</dbReference>
<dbReference type="GO" id="GO:0065002">
    <property type="term" value="P:intracellular protein transmembrane transport"/>
    <property type="evidence" value="ECO:0007669"/>
    <property type="project" value="UniProtKB-UniRule"/>
</dbReference>
<dbReference type="GO" id="GO:0006605">
    <property type="term" value="P:protein targeting"/>
    <property type="evidence" value="ECO:0007669"/>
    <property type="project" value="UniProtKB-UniRule"/>
</dbReference>
<dbReference type="GO" id="GO:0043952">
    <property type="term" value="P:protein transport by the Sec complex"/>
    <property type="evidence" value="ECO:0007669"/>
    <property type="project" value="UniProtKB-UniRule"/>
</dbReference>
<dbReference type="Gene3D" id="1.10.3370.10">
    <property type="entry name" value="SecY subunit domain"/>
    <property type="match status" value="1"/>
</dbReference>
<dbReference type="HAMAP" id="MF_01465">
    <property type="entry name" value="SecY"/>
    <property type="match status" value="1"/>
</dbReference>
<dbReference type="InterPro" id="IPR026593">
    <property type="entry name" value="SecY"/>
</dbReference>
<dbReference type="InterPro" id="IPR002208">
    <property type="entry name" value="SecY/SEC61-alpha"/>
</dbReference>
<dbReference type="InterPro" id="IPR030659">
    <property type="entry name" value="SecY_CS"/>
</dbReference>
<dbReference type="InterPro" id="IPR023201">
    <property type="entry name" value="SecY_dom_sf"/>
</dbReference>
<dbReference type="NCBIfam" id="TIGR00967">
    <property type="entry name" value="3a0501s007"/>
    <property type="match status" value="1"/>
</dbReference>
<dbReference type="PANTHER" id="PTHR10906">
    <property type="entry name" value="SECY/SEC61-ALPHA FAMILY MEMBER"/>
    <property type="match status" value="1"/>
</dbReference>
<dbReference type="Pfam" id="PF00344">
    <property type="entry name" value="SecY"/>
    <property type="match status" value="1"/>
</dbReference>
<dbReference type="PIRSF" id="PIRSF004557">
    <property type="entry name" value="SecY"/>
    <property type="match status" value="1"/>
</dbReference>
<dbReference type="PRINTS" id="PR00303">
    <property type="entry name" value="SECYTRNLCASE"/>
</dbReference>
<dbReference type="SUPFAM" id="SSF103491">
    <property type="entry name" value="Preprotein translocase SecY subunit"/>
    <property type="match status" value="1"/>
</dbReference>
<dbReference type="PROSITE" id="PS00756">
    <property type="entry name" value="SECY_2"/>
    <property type="match status" value="1"/>
</dbReference>
<protein>
    <recommendedName>
        <fullName evidence="1">Protein translocase subunit SecY 2</fullName>
    </recommendedName>
</protein>
<keyword id="KW-1003">Cell membrane</keyword>
<keyword id="KW-0472">Membrane</keyword>
<keyword id="KW-0614">Plasmid</keyword>
<keyword id="KW-0653">Protein transport</keyword>
<keyword id="KW-0811">Translocation</keyword>
<keyword id="KW-0812">Transmembrane</keyword>
<keyword id="KW-1133">Transmembrane helix</keyword>
<keyword id="KW-0813">Transport</keyword>
<feature type="chain" id="PRO_0000414206" description="Protein translocase subunit SecY 2">
    <location>
        <begin position="1"/>
        <end position="410"/>
    </location>
</feature>
<feature type="transmembrane region" description="Helical" evidence="1">
    <location>
        <begin position="2"/>
        <end position="22"/>
    </location>
</feature>
<feature type="transmembrane region" description="Helical" evidence="1">
    <location>
        <begin position="45"/>
        <end position="65"/>
    </location>
</feature>
<feature type="transmembrane region" description="Helical" evidence="1">
    <location>
        <begin position="94"/>
        <end position="114"/>
    </location>
</feature>
<feature type="transmembrane region" description="Helical" evidence="1">
    <location>
        <begin position="125"/>
        <end position="145"/>
    </location>
</feature>
<feature type="transmembrane region" description="Helical" evidence="1">
    <location>
        <begin position="147"/>
        <end position="167"/>
    </location>
</feature>
<feature type="transmembrane region" description="Helical" evidence="1">
    <location>
        <begin position="188"/>
        <end position="208"/>
    </location>
</feature>
<feature type="transmembrane region" description="Helical" evidence="1">
    <location>
        <begin position="241"/>
        <end position="261"/>
    </location>
</feature>
<feature type="transmembrane region" description="Helical" evidence="1">
    <location>
        <begin position="284"/>
        <end position="304"/>
    </location>
</feature>
<feature type="transmembrane region" description="Helical" evidence="1">
    <location>
        <begin position="339"/>
        <end position="359"/>
    </location>
</feature>
<feature type="transmembrane region" description="Helical" evidence="1">
    <location>
        <begin position="366"/>
        <end position="386"/>
    </location>
</feature>
<geneLocation type="plasmid">
    <name>pWW1</name>
</geneLocation>